<reference key="1">
    <citation type="journal article" date="1995" name="J. Cell Biol.">
        <title>The Hansenula polymorpha PER8 gene encodes a novel peroxisomal integral membrane protein involved in proliferation.</title>
        <authorList>
            <person name="Tan X."/>
            <person name="Waterham H.R."/>
            <person name="Veenhuis M."/>
            <person name="Cregg J.M."/>
        </authorList>
    </citation>
    <scope>NUCLEOTIDE SEQUENCE [GENOMIC DNA]</scope>
    <source>
        <strain>ATCC 34438 / CBS 4732 / DSM 70277 / JCM 3621 / NBRC 1476 / NRRL Y-5445</strain>
    </source>
</reference>
<sequence length="295" mass="34002">MFKLLSFANAPAIVRANQKDSYFESRLHNQLLDVVKAIKGSHFVHKYPEELRTLATALYLCLTTLVGSKTLGEEYVDLVYVSRDGRKIPKFASRFGFVVAYVLFPYAVRQLLQKLKAQQSRLAQLVSGVSYMNVMDLLNLHLALFYFTGKYYQFAKRLFGLRYAFGYRVDKNQQRARGNYELLGLLIIFQTVFKNVANLRKLWGATKTVQDSGDLIYRFRDQTSDVIDLADPKVLPYLPEASRTCMLCLSPMKDPSCGECGHVFCWKCVLDWVKERQECPLCRAKMRESQLLPLR</sequence>
<keyword id="KW-0472">Membrane</keyword>
<keyword id="KW-0479">Metal-binding</keyword>
<keyword id="KW-0576">Peroxisome</keyword>
<keyword id="KW-0962">Peroxisome biogenesis</keyword>
<keyword id="KW-0653">Protein transport</keyword>
<keyword id="KW-0808">Transferase</keyword>
<keyword id="KW-0812">Transmembrane</keyword>
<keyword id="KW-1133">Transmembrane helix</keyword>
<keyword id="KW-0813">Transport</keyword>
<keyword id="KW-0833">Ubl conjugation pathway</keyword>
<keyword id="KW-0862">Zinc</keyword>
<keyword id="KW-0863">Zinc-finger</keyword>
<protein>
    <recommendedName>
        <fullName>Peroxisome biogenesis factor 10</fullName>
        <ecNumber evidence="2">2.3.2.27</ecNumber>
    </recommendedName>
    <alternativeName>
        <fullName>Peroxin-10</fullName>
    </alternativeName>
    <alternativeName>
        <fullName>Peroxisomal biogenesis factor 10</fullName>
    </alternativeName>
    <alternativeName>
        <fullName>Peroxisome assembly protein 10</fullName>
    </alternativeName>
    <alternativeName>
        <fullName>Peroxisome assembly protein PER8</fullName>
    </alternativeName>
</protein>
<feature type="chain" id="PRO_0000056378" description="Peroxisome biogenesis factor 10">
    <location>
        <begin position="1"/>
        <end position="295"/>
    </location>
</feature>
<feature type="topological domain" description="Peroxisomal matrix" evidence="1">
    <location>
        <begin position="1"/>
        <end position="9"/>
    </location>
</feature>
<feature type="transmembrane region" description="Helical; Name=TM1" evidence="1">
    <location>
        <begin position="10"/>
        <end position="39"/>
    </location>
</feature>
<feature type="topological domain" description="Cytoplasmic" evidence="1">
    <location>
        <position position="40"/>
    </location>
</feature>
<feature type="transmembrane region" description="Helical; Name=TM2" evidence="1">
    <location>
        <begin position="41"/>
        <end position="62"/>
    </location>
</feature>
<feature type="topological domain" description="Peroxisomal matrix" evidence="1">
    <location>
        <begin position="63"/>
        <end position="108"/>
    </location>
</feature>
<feature type="transmembrane region" description="Helical; Name=TM3" evidence="1">
    <location>
        <begin position="109"/>
        <end position="120"/>
    </location>
</feature>
<feature type="topological domain" description="Cytoplasmic" evidence="1">
    <location>
        <begin position="121"/>
        <end position="122"/>
    </location>
</feature>
<feature type="transmembrane region" description="Helical; Name=TM4" evidence="1">
    <location>
        <begin position="123"/>
        <end position="148"/>
    </location>
</feature>
<feature type="topological domain" description="Peroxisomal matrix" evidence="1">
    <location>
        <begin position="149"/>
        <end position="179"/>
    </location>
</feature>
<feature type="transmembrane region" description="Helical; Name=TM5" evidence="1">
    <location>
        <begin position="180"/>
        <end position="199"/>
    </location>
</feature>
<feature type="topological domain" description="Cytoplasmic" evidence="1">
    <location>
        <begin position="200"/>
        <end position="295"/>
    </location>
</feature>
<feature type="zinc finger region" description="RING-type" evidence="4">
    <location>
        <begin position="245"/>
        <end position="283"/>
    </location>
</feature>
<feature type="binding site" evidence="1">
    <location>
        <position position="245"/>
    </location>
    <ligand>
        <name>Zn(2+)</name>
        <dbReference type="ChEBI" id="CHEBI:29105"/>
        <label>1</label>
    </ligand>
</feature>
<feature type="binding site" evidence="1">
    <location>
        <position position="248"/>
    </location>
    <ligand>
        <name>Zn(2+)</name>
        <dbReference type="ChEBI" id="CHEBI:29105"/>
        <label>1</label>
    </ligand>
</feature>
<feature type="binding site" evidence="1">
    <location>
        <position position="260"/>
    </location>
    <ligand>
        <name>Zn(2+)</name>
        <dbReference type="ChEBI" id="CHEBI:29105"/>
        <label>2</label>
    </ligand>
</feature>
<feature type="binding site" evidence="1">
    <location>
        <position position="262"/>
    </location>
    <ligand>
        <name>Zn(2+)</name>
        <dbReference type="ChEBI" id="CHEBI:29105"/>
        <label>2</label>
    </ligand>
</feature>
<feature type="binding site" evidence="1">
    <location>
        <position position="265"/>
    </location>
    <ligand>
        <name>Zn(2+)</name>
        <dbReference type="ChEBI" id="CHEBI:29105"/>
        <label>1</label>
    </ligand>
</feature>
<feature type="binding site" evidence="1">
    <location>
        <position position="268"/>
    </location>
    <ligand>
        <name>Zn(2+)</name>
        <dbReference type="ChEBI" id="CHEBI:29105"/>
        <label>1</label>
    </ligand>
</feature>
<feature type="binding site" evidence="1">
    <location>
        <position position="279"/>
    </location>
    <ligand>
        <name>Zn(2+)</name>
        <dbReference type="ChEBI" id="CHEBI:29105"/>
        <label>2</label>
    </ligand>
</feature>
<feature type="binding site" evidence="1">
    <location>
        <position position="282"/>
    </location>
    <ligand>
        <name>Zn(2+)</name>
        <dbReference type="ChEBI" id="CHEBI:29105"/>
        <label>2</label>
    </ligand>
</feature>
<accession>Q00940</accession>
<proteinExistence type="inferred from homology"/>
<comment type="function">
    <text evidence="2">E3 ubiquitin-protein ligase component of a retrotranslocation channel required for peroxisome organization by mediating export of the PEX5 receptor from peroxisomes to the cytosol, thereby promoting PEX5 recycling. The retrotranslocation channel is composed of PEX2, PEX10 and PEX12; each subunit contributing transmembrane segments that coassemble into an open channel that specifically allows the passage of PEX5 through the peroxisomal membrane. PEX10 also regulates PEX5 recycling by acting as a E3 ubiquitin-protein ligase. When PEX5 recycling is compromised, PEX10 catalyzes polyubiquitination of PEX5 during its passage through the retrotranslocation channel, leading to its degradation.</text>
</comment>
<comment type="catalytic activity">
    <reaction evidence="2">
        <text>S-ubiquitinyl-[E2 ubiquitin-conjugating enzyme]-L-cysteine + [acceptor protein]-L-lysine = [E2 ubiquitin-conjugating enzyme]-L-cysteine + N(6)-ubiquitinyl-[acceptor protein]-L-lysine.</text>
        <dbReference type="EC" id="2.3.2.27"/>
    </reaction>
</comment>
<comment type="activity regulation">
    <text evidence="2">The E3 ubiquitin-protein ligase activity is stimulated by PEX12.</text>
</comment>
<comment type="pathway">
    <text evidence="2">Protein modification; protein ubiquitination.</text>
</comment>
<comment type="subunit">
    <text evidence="2">Component of the PEX2-PEX10-PEX12 retrotranslocation channel, composed of PEX2, PEX10 and PEX12.</text>
</comment>
<comment type="subcellular location">
    <subcellularLocation>
        <location evidence="2">Peroxisome membrane</location>
        <topology evidence="3">Multi-pass membrane protein</topology>
    </subcellularLocation>
</comment>
<comment type="domain">
    <text evidence="1">The three subunits of the retrotranslocation channel (PEX2, PEX10 and PEX12) coassemble in the membrane into a channel with an open 10 Angstrom pore. The RING-type zinc-fingers that catalyze PEX5 receptor ubiquitination are positioned above the pore on the cytosolic side of the complex.</text>
</comment>
<comment type="similarity">
    <text evidence="5">Belongs to the pex2/pex10/pex12 family.</text>
</comment>
<dbReference type="EC" id="2.3.2.27" evidence="2"/>
<dbReference type="EMBL" id="Z38001">
    <property type="protein sequence ID" value="CAA86101.1"/>
    <property type="molecule type" value="Genomic_DNA"/>
</dbReference>
<dbReference type="PIR" id="A56488">
    <property type="entry name" value="A56488"/>
</dbReference>
<dbReference type="SMR" id="Q00940"/>
<dbReference type="UniPathway" id="UPA00143"/>
<dbReference type="GO" id="GO:0005778">
    <property type="term" value="C:peroxisomal membrane"/>
    <property type="evidence" value="ECO:0007669"/>
    <property type="project" value="UniProtKB-SubCell"/>
</dbReference>
<dbReference type="GO" id="GO:0016740">
    <property type="term" value="F:transferase activity"/>
    <property type="evidence" value="ECO:0007669"/>
    <property type="project" value="UniProtKB-KW"/>
</dbReference>
<dbReference type="GO" id="GO:0008270">
    <property type="term" value="F:zinc ion binding"/>
    <property type="evidence" value="ECO:0007669"/>
    <property type="project" value="UniProtKB-KW"/>
</dbReference>
<dbReference type="GO" id="GO:0016562">
    <property type="term" value="P:protein import into peroxisome matrix, receptor recycling"/>
    <property type="evidence" value="ECO:0007669"/>
    <property type="project" value="UniProtKB-ARBA"/>
</dbReference>
<dbReference type="GO" id="GO:0016567">
    <property type="term" value="P:protein ubiquitination"/>
    <property type="evidence" value="ECO:0007669"/>
    <property type="project" value="UniProtKB-UniPathway"/>
</dbReference>
<dbReference type="CDD" id="cd16527">
    <property type="entry name" value="RING-HC_PEX10"/>
    <property type="match status" value="1"/>
</dbReference>
<dbReference type="Gene3D" id="3.30.40.10">
    <property type="entry name" value="Zinc/RING finger domain, C3HC4 (zinc finger)"/>
    <property type="match status" value="1"/>
</dbReference>
<dbReference type="InterPro" id="IPR025654">
    <property type="entry name" value="PEX2/10"/>
</dbReference>
<dbReference type="InterPro" id="IPR006845">
    <property type="entry name" value="Pex_N"/>
</dbReference>
<dbReference type="InterPro" id="IPR001841">
    <property type="entry name" value="Znf_RING"/>
</dbReference>
<dbReference type="InterPro" id="IPR013083">
    <property type="entry name" value="Znf_RING/FYVE/PHD"/>
</dbReference>
<dbReference type="InterPro" id="IPR017907">
    <property type="entry name" value="Znf_RING_CS"/>
</dbReference>
<dbReference type="PANTHER" id="PTHR23350">
    <property type="entry name" value="PEROXISOME ASSEMBLY PROTEIN 10"/>
    <property type="match status" value="1"/>
</dbReference>
<dbReference type="PANTHER" id="PTHR23350:SF0">
    <property type="entry name" value="PEROXISOME BIOGENESIS FACTOR 10"/>
    <property type="match status" value="1"/>
</dbReference>
<dbReference type="Pfam" id="PF04757">
    <property type="entry name" value="Pex2_Pex12"/>
    <property type="match status" value="1"/>
</dbReference>
<dbReference type="Pfam" id="PF13639">
    <property type="entry name" value="zf-RING_2"/>
    <property type="match status" value="1"/>
</dbReference>
<dbReference type="SMART" id="SM00184">
    <property type="entry name" value="RING"/>
    <property type="match status" value="1"/>
</dbReference>
<dbReference type="SUPFAM" id="SSF57850">
    <property type="entry name" value="RING/U-box"/>
    <property type="match status" value="1"/>
</dbReference>
<dbReference type="PROSITE" id="PS00518">
    <property type="entry name" value="ZF_RING_1"/>
    <property type="match status" value="1"/>
</dbReference>
<dbReference type="PROSITE" id="PS50089">
    <property type="entry name" value="ZF_RING_2"/>
    <property type="match status" value="1"/>
</dbReference>
<gene>
    <name type="primary">PEX10</name>
    <name type="synonym">PER8</name>
</gene>
<organism>
    <name type="scientific">Pichia angusta</name>
    <name type="common">Yeast</name>
    <name type="synonym">Hansenula polymorpha</name>
    <dbReference type="NCBI Taxonomy" id="870730"/>
    <lineage>
        <taxon>Eukaryota</taxon>
        <taxon>Fungi</taxon>
        <taxon>Dikarya</taxon>
        <taxon>Ascomycota</taxon>
        <taxon>Saccharomycotina</taxon>
        <taxon>Pichiomycetes</taxon>
        <taxon>Pichiales</taxon>
        <taxon>Pichiaceae</taxon>
        <taxon>Ogataea</taxon>
    </lineage>
</organism>
<evidence type="ECO:0000250" key="1">
    <source>
        <dbReference type="UniProtKB" id="G2Q0E2"/>
    </source>
</evidence>
<evidence type="ECO:0000250" key="2">
    <source>
        <dbReference type="UniProtKB" id="Q05568"/>
    </source>
</evidence>
<evidence type="ECO:0000255" key="3"/>
<evidence type="ECO:0000255" key="4">
    <source>
        <dbReference type="PROSITE-ProRule" id="PRU00175"/>
    </source>
</evidence>
<evidence type="ECO:0000305" key="5"/>
<name>PEX10_PICAN</name>